<reference key="1">
    <citation type="submission" date="1993-01" db="EMBL/GenBank/DDBJ databases">
        <authorList>
            <person name="Hagege J.M."/>
            <person name="Boccard F."/>
            <person name="Smokvina T."/>
            <person name="Pernodet J.L."/>
            <person name="Friedmann A."/>
            <person name="Guerineau M."/>
        </authorList>
    </citation>
    <scope>NUCLEOTIDE SEQUENCE [GENOMIC DNA]</scope>
    <source>
        <strain>ATCC 23877 / 3486 / DSM 40053 / JCM 4204 / NBRC 12836 / NRRL B-2516</strain>
    </source>
</reference>
<keyword id="KW-0614">Plasmid</keyword>
<feature type="chain" id="PRO_0000068527" description="Uncharacterized 19.3 kDa protein in repSA 5'region">
    <location>
        <begin position="1"/>
        <end position="183"/>
    </location>
</feature>
<feature type="domain" description="GGDEF" evidence="1">
    <location>
        <begin position="55"/>
        <end position="183"/>
    </location>
</feature>
<name>YREP_STRAM</name>
<proteinExistence type="predicted"/>
<accession>P36892</accession>
<geneLocation type="plasmid">
    <name>pSAM2</name>
</geneLocation>
<protein>
    <recommendedName>
        <fullName>Uncharacterized 19.3 kDa protein in repSA 5'region</fullName>
    </recommendedName>
    <alternativeName>
        <fullName>ORF183</fullName>
    </alternativeName>
</protein>
<sequence>MDPQTAATLLPLLGWALHGSVLTRRLASARRDPLTGLHTRAGWTARAEHCIHRHPRAAVLLVDLDHFKTLNDTHGHAAGDAALIATAHRLSSWCGRHGTAGRLGGDEFVTAIRDLDAVDLDALTTALHQPTNYDGTALPLAASVGVCRVAELPVPALTDALAAADAAMYAAKGRSRRGSRPAR</sequence>
<organism>
    <name type="scientific">Streptomyces ambofaciens</name>
    <dbReference type="NCBI Taxonomy" id="1889"/>
    <lineage>
        <taxon>Bacteria</taxon>
        <taxon>Bacillati</taxon>
        <taxon>Actinomycetota</taxon>
        <taxon>Actinomycetes</taxon>
        <taxon>Kitasatosporales</taxon>
        <taxon>Streptomycetaceae</taxon>
        <taxon>Streptomyces</taxon>
    </lineage>
</organism>
<comment type="function">
    <text>Might be involved in pSAM2 replication control.</text>
</comment>
<evidence type="ECO:0000255" key="1">
    <source>
        <dbReference type="PROSITE-ProRule" id="PRU00095"/>
    </source>
</evidence>
<dbReference type="EMBL" id="Z19594">
    <property type="protein sequence ID" value="CAA79646.1"/>
    <property type="molecule type" value="Genomic_DNA"/>
</dbReference>
<dbReference type="PIR" id="S33422">
    <property type="entry name" value="S33422"/>
</dbReference>
<dbReference type="SMR" id="P36892"/>
<dbReference type="OMA" id="HGRRNTH"/>
<dbReference type="CDD" id="cd01949">
    <property type="entry name" value="GGDEF"/>
    <property type="match status" value="1"/>
</dbReference>
<dbReference type="Gene3D" id="3.30.70.270">
    <property type="match status" value="1"/>
</dbReference>
<dbReference type="InterPro" id="IPR052155">
    <property type="entry name" value="Biofilm_reg_signaling"/>
</dbReference>
<dbReference type="InterPro" id="IPR000160">
    <property type="entry name" value="GGDEF_dom"/>
</dbReference>
<dbReference type="InterPro" id="IPR029787">
    <property type="entry name" value="Nucleotide_cyclase"/>
</dbReference>
<dbReference type="InterPro" id="IPR043128">
    <property type="entry name" value="Rev_trsase/Diguanyl_cyclase"/>
</dbReference>
<dbReference type="NCBIfam" id="TIGR00254">
    <property type="entry name" value="GGDEF"/>
    <property type="match status" value="1"/>
</dbReference>
<dbReference type="PANTHER" id="PTHR44757:SF2">
    <property type="entry name" value="BIOFILM ARCHITECTURE MAINTENANCE PROTEIN MBAA"/>
    <property type="match status" value="1"/>
</dbReference>
<dbReference type="PANTHER" id="PTHR44757">
    <property type="entry name" value="DIGUANYLATE CYCLASE DGCP"/>
    <property type="match status" value="1"/>
</dbReference>
<dbReference type="Pfam" id="PF00990">
    <property type="entry name" value="GGDEF"/>
    <property type="match status" value="1"/>
</dbReference>
<dbReference type="SMART" id="SM00267">
    <property type="entry name" value="GGDEF"/>
    <property type="match status" value="1"/>
</dbReference>
<dbReference type="SUPFAM" id="SSF55073">
    <property type="entry name" value="Nucleotide cyclase"/>
    <property type="match status" value="1"/>
</dbReference>
<dbReference type="PROSITE" id="PS50887">
    <property type="entry name" value="GGDEF"/>
    <property type="match status" value="1"/>
</dbReference>